<feature type="chain" id="PRO_0000456562" description="Small ribosomal subunit protein eS25">
    <location>
        <begin position="1"/>
        <end position="105"/>
    </location>
</feature>
<sequence length="105" mass="11609">MAPKVQQTKAAKAAAALAGGKKGKKKWNKGKVKDKAQHIVILDQEKYDRILKDVPTYKYVSVSVLVDRLKIGGSLARVALRQLEEDGIITPVLKHSKQAIYTRAQ</sequence>
<organism>
    <name type="scientific">Candida albicans (strain SC5314 / ATCC MYA-2876)</name>
    <name type="common">Yeast</name>
    <dbReference type="NCBI Taxonomy" id="237561"/>
    <lineage>
        <taxon>Eukaryota</taxon>
        <taxon>Fungi</taxon>
        <taxon>Dikarya</taxon>
        <taxon>Ascomycota</taxon>
        <taxon>Saccharomycotina</taxon>
        <taxon>Pichiomycetes</taxon>
        <taxon>Debaryomycetaceae</taxon>
        <taxon>Candida/Lodderomyces clade</taxon>
        <taxon>Candida</taxon>
    </lineage>
</organism>
<reference key="1">
    <citation type="journal article" date="2004" name="Proc. Natl. Acad. Sci. U.S.A.">
        <title>The diploid genome sequence of Candida albicans.</title>
        <authorList>
            <person name="Jones T."/>
            <person name="Federspiel N.A."/>
            <person name="Chibana H."/>
            <person name="Dungan J."/>
            <person name="Kalman S."/>
            <person name="Magee B.B."/>
            <person name="Newport G."/>
            <person name="Thorstenson Y.R."/>
            <person name="Agabian N."/>
            <person name="Magee P.T."/>
            <person name="Davis R.W."/>
            <person name="Scherer S."/>
        </authorList>
    </citation>
    <scope>NUCLEOTIDE SEQUENCE [LARGE SCALE GENOMIC DNA]</scope>
    <source>
        <strain>SC5314 / ATCC MYA-2876</strain>
    </source>
</reference>
<reference key="2">
    <citation type="journal article" date="2007" name="Genome Biol.">
        <title>Assembly of the Candida albicans genome into sixteen supercontigs aligned on the eight chromosomes.</title>
        <authorList>
            <person name="van het Hoog M."/>
            <person name="Rast T.J."/>
            <person name="Martchenko M."/>
            <person name="Grindle S."/>
            <person name="Dignard D."/>
            <person name="Hogues H."/>
            <person name="Cuomo C."/>
            <person name="Berriman M."/>
            <person name="Scherer S."/>
            <person name="Magee B.B."/>
            <person name="Whiteway M."/>
            <person name="Chibana H."/>
            <person name="Nantel A."/>
            <person name="Magee P.T."/>
        </authorList>
    </citation>
    <scope>GENOME REANNOTATION</scope>
    <source>
        <strain>SC5314 / ATCC MYA-2876</strain>
    </source>
</reference>
<reference key="3">
    <citation type="journal article" date="2013" name="Genome Biol.">
        <title>Assembly of a phased diploid Candida albicans genome facilitates allele-specific measurements and provides a simple model for repeat and indel structure.</title>
        <authorList>
            <person name="Muzzey D."/>
            <person name="Schwartz K."/>
            <person name="Weissman J.S."/>
            <person name="Sherlock G."/>
        </authorList>
    </citation>
    <scope>NUCLEOTIDE SEQUENCE [LARGE SCALE GENOMIC DNA]</scope>
    <scope>GENOME REANNOTATION</scope>
    <source>
        <strain>SC5314 / ATCC MYA-2876</strain>
    </source>
</reference>
<reference evidence="5 6 7" key="4">
    <citation type="journal article" date="2022" name="Sci. Adv.">
        <title>E-site drug specificity of the human pathogen Candida albicans ribosome.</title>
        <authorList>
            <person name="Zgadzay Y."/>
            <person name="Kolosova O."/>
            <person name="Stetsenko A."/>
            <person name="Wu C."/>
            <person name="Bruchlen D."/>
            <person name="Usachev K."/>
            <person name="Validov S."/>
            <person name="Jenner L."/>
            <person name="Rogachev A."/>
            <person name="Yusupova G."/>
            <person name="Sachs M.S."/>
            <person name="Guskov A."/>
            <person name="Yusupov M."/>
        </authorList>
    </citation>
    <scope>STRUCTURE BY ELECTRON MICROSCOPY (2.32 ANGSTROMS) OF THE 80S RIBOSOME</scope>
    <scope>SUBUNIT</scope>
</reference>
<protein>
    <recommendedName>
        <fullName evidence="2">Small ribosomal subunit protein eS25</fullName>
    </recommendedName>
    <alternativeName>
        <fullName>40S ribosomal protein S25</fullName>
    </alternativeName>
</protein>
<keyword id="KW-0002">3D-structure</keyword>
<keyword id="KW-0963">Cytoplasm</keyword>
<keyword id="KW-1185">Reference proteome</keyword>
<keyword id="KW-0687">Ribonucleoprotein</keyword>
<keyword id="KW-0689">Ribosomal protein</keyword>
<dbReference type="EMBL" id="CP017627">
    <property type="protein sequence ID" value="AOW29766.1"/>
    <property type="molecule type" value="Genomic_DNA"/>
</dbReference>
<dbReference type="RefSeq" id="XP_711416.1">
    <property type="nucleotide sequence ID" value="XM_706324.1"/>
</dbReference>
<dbReference type="PDB" id="7PZY">
    <property type="method" value="EM"/>
    <property type="resolution" value="2.32 A"/>
    <property type="chains" value="a=1-105"/>
</dbReference>
<dbReference type="PDB" id="7Q08">
    <property type="method" value="EM"/>
    <property type="resolution" value="2.56 A"/>
    <property type="chains" value="a=1-105"/>
</dbReference>
<dbReference type="PDB" id="7Q0F">
    <property type="method" value="EM"/>
    <property type="resolution" value="2.64 A"/>
    <property type="chains" value="a=1-105"/>
</dbReference>
<dbReference type="PDB" id="7Q0P">
    <property type="method" value="EM"/>
    <property type="resolution" value="2.77 A"/>
    <property type="chains" value="a=1-105"/>
</dbReference>
<dbReference type="PDB" id="7Q0R">
    <property type="method" value="EM"/>
    <property type="resolution" value="2.67 A"/>
    <property type="chains" value="a=1-105"/>
</dbReference>
<dbReference type="PDB" id="8C3A">
    <property type="method" value="X-ray"/>
    <property type="resolution" value="3.00 A"/>
    <property type="chains" value="DM/b=1-105"/>
</dbReference>
<dbReference type="PDB" id="8OGJ">
    <property type="method" value="EM"/>
    <property type="resolution" value="3.10 A"/>
    <property type="chains" value="a=1-105"/>
</dbReference>
<dbReference type="PDB" id="8OH6">
    <property type="method" value="X-ray"/>
    <property type="resolution" value="3.35 A"/>
    <property type="chains" value="DM/b=1-105"/>
</dbReference>
<dbReference type="PDB" id="8OI5">
    <property type="method" value="X-ray"/>
    <property type="resolution" value="2.90 A"/>
    <property type="chains" value="DM/b=1-105"/>
</dbReference>
<dbReference type="PDB" id="8OJ3">
    <property type="method" value="X-ray"/>
    <property type="resolution" value="3.50 A"/>
    <property type="chains" value="DM/b=1-105"/>
</dbReference>
<dbReference type="PDBsum" id="7PZY"/>
<dbReference type="PDBsum" id="7Q08"/>
<dbReference type="PDBsum" id="7Q0F"/>
<dbReference type="PDBsum" id="7Q0P"/>
<dbReference type="PDBsum" id="7Q0R"/>
<dbReference type="PDBsum" id="8C3A"/>
<dbReference type="PDBsum" id="8OGJ"/>
<dbReference type="PDBsum" id="8OH6"/>
<dbReference type="PDBsum" id="8OI5"/>
<dbReference type="PDBsum" id="8OJ3"/>
<dbReference type="EMDB" id="EMD-13737"/>
<dbReference type="EMDB" id="EMD-13741"/>
<dbReference type="EMDB" id="EMD-13744"/>
<dbReference type="EMDB" id="EMD-13749"/>
<dbReference type="EMDB" id="EMD-13750"/>
<dbReference type="SMR" id="A0A1D8PNQ6"/>
<dbReference type="FunCoup" id="A0A1D8PNQ6">
    <property type="interactions" value="972"/>
</dbReference>
<dbReference type="STRING" id="237561.A0A1D8PNQ6"/>
<dbReference type="EnsemblFungi" id="C5_03540C_A-T">
    <property type="protein sequence ID" value="C5_03540C_A-T-p1"/>
    <property type="gene ID" value="C5_03540C_A"/>
</dbReference>
<dbReference type="GeneID" id="3646972"/>
<dbReference type="KEGG" id="cal:CAALFM_C503540CA"/>
<dbReference type="CGD" id="CAL0000173943">
    <property type="gene designation" value="RPS25B"/>
</dbReference>
<dbReference type="VEuPathDB" id="FungiDB:C5_03540C_A"/>
<dbReference type="eggNOG" id="KOG1767">
    <property type="taxonomic scope" value="Eukaryota"/>
</dbReference>
<dbReference type="InParanoid" id="A0A1D8PNQ6"/>
<dbReference type="OMA" id="RIVHHSG"/>
<dbReference type="OrthoDB" id="10263513at2759"/>
<dbReference type="Proteomes" id="UP000000559">
    <property type="component" value="Chromosome 5"/>
</dbReference>
<dbReference type="GO" id="GO:0022627">
    <property type="term" value="C:cytosolic small ribosomal subunit"/>
    <property type="evidence" value="ECO:0000318"/>
    <property type="project" value="GO_Central"/>
</dbReference>
<dbReference type="GO" id="GO:0003735">
    <property type="term" value="F:structural constituent of ribosome"/>
    <property type="evidence" value="ECO:0000318"/>
    <property type="project" value="GO_Central"/>
</dbReference>
<dbReference type="FunFam" id="3.30.63.20:FF:000001">
    <property type="entry name" value="40S ribosomal protein S25"/>
    <property type="match status" value="1"/>
</dbReference>
<dbReference type="Gene3D" id="3.30.63.20">
    <property type="match status" value="1"/>
</dbReference>
<dbReference type="InterPro" id="IPR004977">
    <property type="entry name" value="Ribosomal_eS25"/>
</dbReference>
<dbReference type="InterPro" id="IPR036390">
    <property type="entry name" value="WH_DNA-bd_sf"/>
</dbReference>
<dbReference type="PANTHER" id="PTHR12850">
    <property type="entry name" value="40S RIBOSOMAL PROTEIN S25"/>
    <property type="match status" value="1"/>
</dbReference>
<dbReference type="Pfam" id="PF03297">
    <property type="entry name" value="Ribosomal_S25"/>
    <property type="match status" value="1"/>
</dbReference>
<dbReference type="SUPFAM" id="SSF46785">
    <property type="entry name" value="Winged helix' DNA-binding domain"/>
    <property type="match status" value="1"/>
</dbReference>
<proteinExistence type="evidence at protein level"/>
<comment type="function">
    <text evidence="4">Component of the ribosome, a large ribonucleoprotein complex responsible for the synthesis of proteins in the cell. The small ribosomal subunit (SSU) binds messenger RNAs (mRNAs) and translates the encoded message by selecting cognate aminoacyl-transfer RNA (tRNA) molecules. The large subunit (LSU) contains the ribosomal catalytic site termed the peptidyl transferase center (PTC), which catalyzes the formation of peptide bonds, thereby polymerizing the amino acids delivered by tRNAs into a polypeptide chain. The nascent polypeptides leave the ribosome through a tunnel in the LSU and interact with protein factors that function in enzymatic processing, targeting, and the membrane insertion of nascent chains at the exit of the ribosomal tunnel.</text>
</comment>
<comment type="subunit">
    <text evidence="1">Component of the small ribosomal subunit (PubMed:35613268). Mature ribosomes consist of a small (40S) and a large (60S) subunit (PubMed:35613268). The 40S subunit contains about 32 different proteins and 1 molecule of RNA (18S) (PubMed:35613268). The 60S subunit contains 45 different proteins and 3 molecules of RNA (25S, 5.8S and 5S) (PubMed:35613268).</text>
</comment>
<comment type="subcellular location">
    <subcellularLocation>
        <location evidence="4">Cytoplasm</location>
    </subcellularLocation>
</comment>
<comment type="similarity">
    <text evidence="3">Belongs to the eukaryotic ribosomal protein eS25 family.</text>
</comment>
<accession>A0A1D8PNQ6</accession>
<evidence type="ECO:0000269" key="1">
    <source>
    </source>
</evidence>
<evidence type="ECO:0000303" key="2">
    <source>
    </source>
</evidence>
<evidence type="ECO:0000305" key="3"/>
<evidence type="ECO:0000305" key="4">
    <source>
    </source>
</evidence>
<evidence type="ECO:0007744" key="5">
    <source>
        <dbReference type="PDB" id="7PZY"/>
    </source>
</evidence>
<evidence type="ECO:0007744" key="6">
    <source>
        <dbReference type="PDB" id="7Q0F"/>
    </source>
</evidence>
<evidence type="ECO:0007744" key="7">
    <source>
        <dbReference type="PDB" id="7Q0P"/>
    </source>
</evidence>
<gene>
    <name type="primary">RPS25B</name>
    <name type="ordered locus">orf19.6663</name>
    <name type="ORF">CAALFM_C503540CA</name>
</gene>
<name>RS25B_CANAL</name>